<accession>Q6L3B2</accession>
<organism>
    <name type="scientific">Saccharum hybrid</name>
    <name type="common">Sugarcane</name>
    <dbReference type="NCBI Taxonomy" id="15819"/>
    <lineage>
        <taxon>Eukaryota</taxon>
        <taxon>Viridiplantae</taxon>
        <taxon>Streptophyta</taxon>
        <taxon>Embryophyta</taxon>
        <taxon>Tracheophyta</taxon>
        <taxon>Spermatophyta</taxon>
        <taxon>Magnoliopsida</taxon>
        <taxon>Liliopsida</taxon>
        <taxon>Poales</taxon>
        <taxon>Poaceae</taxon>
        <taxon>PACMAD clade</taxon>
        <taxon>Panicoideae</taxon>
        <taxon>Andropogonodae</taxon>
        <taxon>Andropogoneae</taxon>
        <taxon>Saccharinae</taxon>
        <taxon>Saccharum</taxon>
    </lineage>
</organism>
<comment type="function">
    <text evidence="1">One of the components of the core complex of photosystem II (PSII), required for its stability and/or assembly. PSII is a light-driven water:plastoquinone oxidoreductase that uses light energy to abstract electrons from H(2)O, generating O(2) and a proton gradient subsequently used for ATP formation. It consists of a core antenna complex that captures photons, and an electron transfer chain that converts photonic excitation into a charge separation.</text>
</comment>
<comment type="subunit">
    <text evidence="1">PSII is composed of 1 copy each of membrane proteins PsbA, PsbB, PsbC, PsbD, PsbE, PsbF, PsbH, PsbI, PsbJ, PsbK, PsbL, PsbM, PsbT, PsbX, PsbY, PsbZ, Psb30/Ycf12, at least 3 peripheral proteins of the oxygen-evolving complex and a large number of cofactors. It forms dimeric complexes.</text>
</comment>
<comment type="subcellular location">
    <subcellularLocation>
        <location evidence="1">Plastid</location>
        <location evidence="1">Chloroplast thylakoid membrane</location>
        <topology evidence="1">Single-pass membrane protein</topology>
    </subcellularLocation>
</comment>
<comment type="similarity">
    <text evidence="1">Belongs to the PsbI family.</text>
</comment>
<dbReference type="EMBL" id="AE009947">
    <property type="protein sequence ID" value="AAT44680.1"/>
    <property type="molecule type" value="Genomic_DNA"/>
</dbReference>
<dbReference type="SMR" id="Q6L3B2"/>
<dbReference type="GO" id="GO:0009535">
    <property type="term" value="C:chloroplast thylakoid membrane"/>
    <property type="evidence" value="ECO:0007669"/>
    <property type="project" value="UniProtKB-SubCell"/>
</dbReference>
<dbReference type="GO" id="GO:0009539">
    <property type="term" value="C:photosystem II reaction center"/>
    <property type="evidence" value="ECO:0007669"/>
    <property type="project" value="InterPro"/>
</dbReference>
<dbReference type="GO" id="GO:0015979">
    <property type="term" value="P:photosynthesis"/>
    <property type="evidence" value="ECO:0007669"/>
    <property type="project" value="UniProtKB-UniRule"/>
</dbReference>
<dbReference type="HAMAP" id="MF_01316">
    <property type="entry name" value="PSII_PsbI"/>
    <property type="match status" value="1"/>
</dbReference>
<dbReference type="InterPro" id="IPR003686">
    <property type="entry name" value="PSII_PsbI"/>
</dbReference>
<dbReference type="InterPro" id="IPR037271">
    <property type="entry name" value="PSII_PsbI_sf"/>
</dbReference>
<dbReference type="NCBIfam" id="NF002735">
    <property type="entry name" value="PRK02655.1"/>
    <property type="match status" value="1"/>
</dbReference>
<dbReference type="PANTHER" id="PTHR35772">
    <property type="entry name" value="PHOTOSYSTEM II REACTION CENTER PROTEIN I"/>
    <property type="match status" value="1"/>
</dbReference>
<dbReference type="PANTHER" id="PTHR35772:SF1">
    <property type="entry name" value="PHOTOSYSTEM II REACTION CENTER PROTEIN I"/>
    <property type="match status" value="1"/>
</dbReference>
<dbReference type="Pfam" id="PF02532">
    <property type="entry name" value="PsbI"/>
    <property type="match status" value="1"/>
</dbReference>
<dbReference type="SUPFAM" id="SSF161041">
    <property type="entry name" value="Photosystem II reaction center protein I, PsbI"/>
    <property type="match status" value="1"/>
</dbReference>
<reference key="1">
    <citation type="journal article" date="2004" name="Curr. Genet.">
        <title>Structural features and transcript-editing analysis of sugarcane (Saccharum officinarum L.) chloroplast genome.</title>
        <authorList>
            <person name="Calsa T. Jr."/>
            <person name="Carraro D.M."/>
            <person name="Benatti M.R."/>
            <person name="Barbosa A.C."/>
            <person name="Kitajima J.P."/>
            <person name="Carrer H."/>
        </authorList>
    </citation>
    <scope>NUCLEOTIDE SEQUENCE [LARGE SCALE GENOMIC DNA]</scope>
    <source>
        <strain>cv. SP-80-3280</strain>
    </source>
</reference>
<geneLocation type="chloroplast"/>
<proteinExistence type="inferred from homology"/>
<name>PSBI_SACHY</name>
<feature type="chain" id="PRO_0000219651" description="Photosystem II reaction center protein I">
    <location>
        <begin position="1"/>
        <end position="36"/>
    </location>
</feature>
<feature type="transmembrane region" description="Helical" evidence="1">
    <location>
        <begin position="4"/>
        <end position="24"/>
    </location>
</feature>
<sequence>MLTLKLFVYTVVIFFVSLFIFGFLSNDPGRNPGREE</sequence>
<gene>
    <name evidence="1" type="primary">psbI</name>
    <name type="ordered locus">PS088</name>
</gene>
<evidence type="ECO:0000255" key="1">
    <source>
        <dbReference type="HAMAP-Rule" id="MF_01316"/>
    </source>
</evidence>
<keyword id="KW-0150">Chloroplast</keyword>
<keyword id="KW-0472">Membrane</keyword>
<keyword id="KW-0602">Photosynthesis</keyword>
<keyword id="KW-0604">Photosystem II</keyword>
<keyword id="KW-0934">Plastid</keyword>
<keyword id="KW-0674">Reaction center</keyword>
<keyword id="KW-0793">Thylakoid</keyword>
<keyword id="KW-0812">Transmembrane</keyword>
<keyword id="KW-1133">Transmembrane helix</keyword>
<protein>
    <recommendedName>
        <fullName evidence="1">Photosystem II reaction center protein I</fullName>
        <shortName evidence="1">PSII-I</shortName>
    </recommendedName>
    <alternativeName>
        <fullName evidence="1">PSII 4.8 kDa protein</fullName>
    </alternativeName>
</protein>